<feature type="chain" id="PRO_1000198664" description="Pyrimidine/purine nucleoside phosphorylase">
    <location>
        <begin position="1"/>
        <end position="94"/>
    </location>
</feature>
<protein>
    <recommendedName>
        <fullName evidence="1">Pyrimidine/purine nucleoside phosphorylase</fullName>
        <ecNumber evidence="1">2.4.2.1</ecNumber>
        <ecNumber evidence="1">2.4.2.2</ecNumber>
    </recommendedName>
    <alternativeName>
        <fullName evidence="1">Adenosine phosphorylase</fullName>
    </alternativeName>
    <alternativeName>
        <fullName evidence="1">Cytidine phosphorylase</fullName>
    </alternativeName>
    <alternativeName>
        <fullName evidence="1">Guanosine phosphorylase</fullName>
    </alternativeName>
    <alternativeName>
        <fullName evidence="1">Inosine phosphorylase</fullName>
    </alternativeName>
    <alternativeName>
        <fullName evidence="1">Thymidine phosphorylase</fullName>
    </alternativeName>
    <alternativeName>
        <fullName evidence="1">Uridine phosphorylase</fullName>
    </alternativeName>
    <alternativeName>
        <fullName evidence="1">Xanthosine phosphorylase</fullName>
    </alternativeName>
</protein>
<dbReference type="EC" id="2.4.2.1" evidence="1"/>
<dbReference type="EC" id="2.4.2.2" evidence="1"/>
<dbReference type="EMBL" id="CU928160">
    <property type="protein sequence ID" value="CAQ97263.1"/>
    <property type="molecule type" value="Genomic_DNA"/>
</dbReference>
<dbReference type="RefSeq" id="WP_000941942.1">
    <property type="nucleotide sequence ID" value="NC_011741.1"/>
</dbReference>
<dbReference type="SMR" id="B7M3N0"/>
<dbReference type="GeneID" id="93777070"/>
<dbReference type="KEGG" id="ecr:ECIAI1_0391"/>
<dbReference type="HOGENOM" id="CLU_157874_0_0_6"/>
<dbReference type="GO" id="GO:0005829">
    <property type="term" value="C:cytosol"/>
    <property type="evidence" value="ECO:0007669"/>
    <property type="project" value="TreeGrafter"/>
</dbReference>
<dbReference type="GO" id="GO:0047975">
    <property type="term" value="F:guanosine phosphorylase activity"/>
    <property type="evidence" value="ECO:0007669"/>
    <property type="project" value="UniProtKB-EC"/>
</dbReference>
<dbReference type="GO" id="GO:0004731">
    <property type="term" value="F:purine-nucleoside phosphorylase activity"/>
    <property type="evidence" value="ECO:0007669"/>
    <property type="project" value="UniProtKB-UniRule"/>
</dbReference>
<dbReference type="GO" id="GO:0009032">
    <property type="term" value="F:thymidine phosphorylase activity"/>
    <property type="evidence" value="ECO:0007669"/>
    <property type="project" value="UniProtKB-EC"/>
</dbReference>
<dbReference type="GO" id="GO:0004850">
    <property type="term" value="F:uridine phosphorylase activity"/>
    <property type="evidence" value="ECO:0007669"/>
    <property type="project" value="UniProtKB-EC"/>
</dbReference>
<dbReference type="CDD" id="cd20296">
    <property type="entry name" value="cupin_PpnP-like"/>
    <property type="match status" value="1"/>
</dbReference>
<dbReference type="FunFam" id="2.60.120.10:FF:000016">
    <property type="entry name" value="Pyrimidine/purine nucleoside phosphorylase"/>
    <property type="match status" value="1"/>
</dbReference>
<dbReference type="Gene3D" id="2.60.120.10">
    <property type="entry name" value="Jelly Rolls"/>
    <property type="match status" value="1"/>
</dbReference>
<dbReference type="HAMAP" id="MF_01537">
    <property type="entry name" value="Nucleos_phosphorylase_PpnP"/>
    <property type="match status" value="1"/>
</dbReference>
<dbReference type="InterPro" id="IPR009664">
    <property type="entry name" value="Ppnp"/>
</dbReference>
<dbReference type="InterPro" id="IPR014710">
    <property type="entry name" value="RmlC-like_jellyroll"/>
</dbReference>
<dbReference type="InterPro" id="IPR011051">
    <property type="entry name" value="RmlC_Cupin_sf"/>
</dbReference>
<dbReference type="NCBIfam" id="NF007875">
    <property type="entry name" value="PRK10579.1"/>
    <property type="match status" value="1"/>
</dbReference>
<dbReference type="PANTHER" id="PTHR36540">
    <property type="entry name" value="PYRIMIDINE/PURINE NUCLEOSIDE PHOSPHORYLASE"/>
    <property type="match status" value="1"/>
</dbReference>
<dbReference type="PANTHER" id="PTHR36540:SF1">
    <property type="entry name" value="PYRIMIDINE_PURINE NUCLEOSIDE PHOSPHORYLASE"/>
    <property type="match status" value="1"/>
</dbReference>
<dbReference type="Pfam" id="PF06865">
    <property type="entry name" value="Ppnp"/>
    <property type="match status" value="1"/>
</dbReference>
<dbReference type="SUPFAM" id="SSF51182">
    <property type="entry name" value="RmlC-like cupins"/>
    <property type="match status" value="1"/>
</dbReference>
<keyword id="KW-0328">Glycosyltransferase</keyword>
<keyword id="KW-0808">Transferase</keyword>
<reference key="1">
    <citation type="journal article" date="2009" name="PLoS Genet.">
        <title>Organised genome dynamics in the Escherichia coli species results in highly diverse adaptive paths.</title>
        <authorList>
            <person name="Touchon M."/>
            <person name="Hoede C."/>
            <person name="Tenaillon O."/>
            <person name="Barbe V."/>
            <person name="Baeriswyl S."/>
            <person name="Bidet P."/>
            <person name="Bingen E."/>
            <person name="Bonacorsi S."/>
            <person name="Bouchier C."/>
            <person name="Bouvet O."/>
            <person name="Calteau A."/>
            <person name="Chiapello H."/>
            <person name="Clermont O."/>
            <person name="Cruveiller S."/>
            <person name="Danchin A."/>
            <person name="Diard M."/>
            <person name="Dossat C."/>
            <person name="Karoui M.E."/>
            <person name="Frapy E."/>
            <person name="Garry L."/>
            <person name="Ghigo J.M."/>
            <person name="Gilles A.M."/>
            <person name="Johnson J."/>
            <person name="Le Bouguenec C."/>
            <person name="Lescat M."/>
            <person name="Mangenot S."/>
            <person name="Martinez-Jehanne V."/>
            <person name="Matic I."/>
            <person name="Nassif X."/>
            <person name="Oztas S."/>
            <person name="Petit M.A."/>
            <person name="Pichon C."/>
            <person name="Rouy Z."/>
            <person name="Ruf C.S."/>
            <person name="Schneider D."/>
            <person name="Tourret J."/>
            <person name="Vacherie B."/>
            <person name="Vallenet D."/>
            <person name="Medigue C."/>
            <person name="Rocha E.P.C."/>
            <person name="Denamur E."/>
        </authorList>
    </citation>
    <scope>NUCLEOTIDE SEQUENCE [LARGE SCALE GENOMIC DNA]</scope>
    <source>
        <strain>IAI1</strain>
    </source>
</reference>
<comment type="function">
    <text evidence="1">Catalyzes the phosphorolysis of diverse nucleosides, yielding D-ribose 1-phosphate and the respective free bases. Can use uridine, adenosine, guanosine, cytidine, thymidine, inosine and xanthosine as substrates. Also catalyzes the reverse reactions.</text>
</comment>
<comment type="catalytic activity">
    <reaction evidence="1">
        <text>a purine D-ribonucleoside + phosphate = a purine nucleobase + alpha-D-ribose 1-phosphate</text>
        <dbReference type="Rhea" id="RHEA:19805"/>
        <dbReference type="ChEBI" id="CHEBI:26386"/>
        <dbReference type="ChEBI" id="CHEBI:43474"/>
        <dbReference type="ChEBI" id="CHEBI:57720"/>
        <dbReference type="ChEBI" id="CHEBI:142355"/>
        <dbReference type="EC" id="2.4.2.1"/>
    </reaction>
</comment>
<comment type="catalytic activity">
    <reaction evidence="1">
        <text>adenosine + phosphate = alpha-D-ribose 1-phosphate + adenine</text>
        <dbReference type="Rhea" id="RHEA:27642"/>
        <dbReference type="ChEBI" id="CHEBI:16335"/>
        <dbReference type="ChEBI" id="CHEBI:16708"/>
        <dbReference type="ChEBI" id="CHEBI:43474"/>
        <dbReference type="ChEBI" id="CHEBI:57720"/>
        <dbReference type="EC" id="2.4.2.1"/>
    </reaction>
</comment>
<comment type="catalytic activity">
    <reaction evidence="1">
        <text>cytidine + phosphate = cytosine + alpha-D-ribose 1-phosphate</text>
        <dbReference type="Rhea" id="RHEA:52540"/>
        <dbReference type="ChEBI" id="CHEBI:16040"/>
        <dbReference type="ChEBI" id="CHEBI:17562"/>
        <dbReference type="ChEBI" id="CHEBI:43474"/>
        <dbReference type="ChEBI" id="CHEBI:57720"/>
        <dbReference type="EC" id="2.4.2.2"/>
    </reaction>
</comment>
<comment type="catalytic activity">
    <reaction evidence="1">
        <text>guanosine + phosphate = alpha-D-ribose 1-phosphate + guanine</text>
        <dbReference type="Rhea" id="RHEA:13233"/>
        <dbReference type="ChEBI" id="CHEBI:16235"/>
        <dbReference type="ChEBI" id="CHEBI:16750"/>
        <dbReference type="ChEBI" id="CHEBI:43474"/>
        <dbReference type="ChEBI" id="CHEBI:57720"/>
        <dbReference type="EC" id="2.4.2.1"/>
    </reaction>
</comment>
<comment type="catalytic activity">
    <reaction evidence="1">
        <text>inosine + phosphate = alpha-D-ribose 1-phosphate + hypoxanthine</text>
        <dbReference type="Rhea" id="RHEA:27646"/>
        <dbReference type="ChEBI" id="CHEBI:17368"/>
        <dbReference type="ChEBI" id="CHEBI:17596"/>
        <dbReference type="ChEBI" id="CHEBI:43474"/>
        <dbReference type="ChEBI" id="CHEBI:57720"/>
        <dbReference type="EC" id="2.4.2.1"/>
    </reaction>
</comment>
<comment type="catalytic activity">
    <reaction evidence="1">
        <text>thymidine + phosphate = 2-deoxy-alpha-D-ribose 1-phosphate + thymine</text>
        <dbReference type="Rhea" id="RHEA:16037"/>
        <dbReference type="ChEBI" id="CHEBI:17748"/>
        <dbReference type="ChEBI" id="CHEBI:17821"/>
        <dbReference type="ChEBI" id="CHEBI:43474"/>
        <dbReference type="ChEBI" id="CHEBI:57259"/>
        <dbReference type="EC" id="2.4.2.2"/>
    </reaction>
</comment>
<comment type="catalytic activity">
    <reaction evidence="1">
        <text>uridine + phosphate = alpha-D-ribose 1-phosphate + uracil</text>
        <dbReference type="Rhea" id="RHEA:24388"/>
        <dbReference type="ChEBI" id="CHEBI:16704"/>
        <dbReference type="ChEBI" id="CHEBI:17568"/>
        <dbReference type="ChEBI" id="CHEBI:43474"/>
        <dbReference type="ChEBI" id="CHEBI:57720"/>
        <dbReference type="EC" id="2.4.2.2"/>
    </reaction>
</comment>
<comment type="catalytic activity">
    <reaction evidence="1">
        <text>xanthosine + phosphate = alpha-D-ribose 1-phosphate + xanthine</text>
        <dbReference type="Rhea" id="RHEA:27638"/>
        <dbReference type="ChEBI" id="CHEBI:17712"/>
        <dbReference type="ChEBI" id="CHEBI:18107"/>
        <dbReference type="ChEBI" id="CHEBI:43474"/>
        <dbReference type="ChEBI" id="CHEBI:57720"/>
        <dbReference type="EC" id="2.4.2.1"/>
    </reaction>
</comment>
<comment type="similarity">
    <text evidence="1">Belongs to the nucleoside phosphorylase PpnP family.</text>
</comment>
<gene>
    <name evidence="1" type="primary">ppnP</name>
    <name type="ordered locus">ECIAI1_0391</name>
</gene>
<name>PPNP_ECO8A</name>
<accession>B7M3N0</accession>
<sequence>MLQSNEYFSGKVKSIGFSSSSTGRASVGVMVEGEYTFSTAEPEEMTVISGALNVLLPDATDWQVYEAGSVFNVPGHSEFHLQVAEPTSYLCRYL</sequence>
<organism>
    <name type="scientific">Escherichia coli O8 (strain IAI1)</name>
    <dbReference type="NCBI Taxonomy" id="585034"/>
    <lineage>
        <taxon>Bacteria</taxon>
        <taxon>Pseudomonadati</taxon>
        <taxon>Pseudomonadota</taxon>
        <taxon>Gammaproteobacteria</taxon>
        <taxon>Enterobacterales</taxon>
        <taxon>Enterobacteriaceae</taxon>
        <taxon>Escherichia</taxon>
    </lineage>
</organism>
<evidence type="ECO:0000255" key="1">
    <source>
        <dbReference type="HAMAP-Rule" id="MF_01537"/>
    </source>
</evidence>
<proteinExistence type="inferred from homology"/>